<organism>
    <name type="scientific">Geobacillus thermodenitrificans (strain NG80-2)</name>
    <dbReference type="NCBI Taxonomy" id="420246"/>
    <lineage>
        <taxon>Bacteria</taxon>
        <taxon>Bacillati</taxon>
        <taxon>Bacillota</taxon>
        <taxon>Bacilli</taxon>
        <taxon>Bacillales</taxon>
        <taxon>Anoxybacillaceae</taxon>
        <taxon>Geobacillus</taxon>
    </lineage>
</organism>
<dbReference type="EC" id="2.3.1.89" evidence="1"/>
<dbReference type="EMBL" id="CP000557">
    <property type="protein sequence ID" value="ABO66289.1"/>
    <property type="molecule type" value="Genomic_DNA"/>
</dbReference>
<dbReference type="RefSeq" id="WP_008878761.1">
    <property type="nucleotide sequence ID" value="NC_009328.1"/>
</dbReference>
<dbReference type="SMR" id="A4ILT5"/>
<dbReference type="GeneID" id="87621495"/>
<dbReference type="KEGG" id="gtn:GTNG_0911"/>
<dbReference type="eggNOG" id="COG2171">
    <property type="taxonomic scope" value="Bacteria"/>
</dbReference>
<dbReference type="HOGENOM" id="CLU_103751_0_0_9"/>
<dbReference type="UniPathway" id="UPA00034">
    <property type="reaction ID" value="UER00022"/>
</dbReference>
<dbReference type="Proteomes" id="UP000001578">
    <property type="component" value="Chromosome"/>
</dbReference>
<dbReference type="GO" id="GO:0047200">
    <property type="term" value="F:tetrahydrodipicolinate N-acetyltransferase activity"/>
    <property type="evidence" value="ECO:0007669"/>
    <property type="project" value="UniProtKB-EC"/>
</dbReference>
<dbReference type="GO" id="GO:0019877">
    <property type="term" value="P:diaminopimelate biosynthetic process"/>
    <property type="evidence" value="ECO:0007669"/>
    <property type="project" value="UniProtKB-UniRule"/>
</dbReference>
<dbReference type="GO" id="GO:0009089">
    <property type="term" value="P:lysine biosynthetic process via diaminopimelate"/>
    <property type="evidence" value="ECO:0007669"/>
    <property type="project" value="UniProtKB-UniRule"/>
</dbReference>
<dbReference type="CDD" id="cd03350">
    <property type="entry name" value="LbH_THP_succinylT"/>
    <property type="match status" value="1"/>
</dbReference>
<dbReference type="Gene3D" id="2.160.10.10">
    <property type="entry name" value="Hexapeptide repeat proteins"/>
    <property type="match status" value="1"/>
</dbReference>
<dbReference type="Gene3D" id="3.30.70.250">
    <property type="entry name" value="Malonyl-CoA ACP transacylase, ACP-binding"/>
    <property type="match status" value="1"/>
</dbReference>
<dbReference type="HAMAP" id="MF_01691">
    <property type="entry name" value="DapH"/>
    <property type="match status" value="1"/>
</dbReference>
<dbReference type="InterPro" id="IPR019873">
    <property type="entry name" value="DapH"/>
</dbReference>
<dbReference type="InterPro" id="IPR013710">
    <property type="entry name" value="DapH_N"/>
</dbReference>
<dbReference type="InterPro" id="IPR001451">
    <property type="entry name" value="Hexapep"/>
</dbReference>
<dbReference type="InterPro" id="IPR018357">
    <property type="entry name" value="Hexapep_transf_CS"/>
</dbReference>
<dbReference type="InterPro" id="IPR050179">
    <property type="entry name" value="Trans_hexapeptide_repeat"/>
</dbReference>
<dbReference type="InterPro" id="IPR011004">
    <property type="entry name" value="Trimer_LpxA-like_sf"/>
</dbReference>
<dbReference type="NCBIfam" id="TIGR03532">
    <property type="entry name" value="DapD_Ac"/>
    <property type="match status" value="1"/>
</dbReference>
<dbReference type="PANTHER" id="PTHR43300:SF10">
    <property type="entry name" value="2,3,4,5-TETRAHYDROPYRIDINE-2,6-DICARBOXYLATE N-ACETYLTRANSFERASE"/>
    <property type="match status" value="1"/>
</dbReference>
<dbReference type="PANTHER" id="PTHR43300">
    <property type="entry name" value="ACETYLTRANSFERASE"/>
    <property type="match status" value="1"/>
</dbReference>
<dbReference type="Pfam" id="PF08503">
    <property type="entry name" value="DapH_N"/>
    <property type="match status" value="1"/>
</dbReference>
<dbReference type="Pfam" id="PF00132">
    <property type="entry name" value="Hexapep"/>
    <property type="match status" value="1"/>
</dbReference>
<dbReference type="Pfam" id="PF14602">
    <property type="entry name" value="Hexapep_2"/>
    <property type="match status" value="2"/>
</dbReference>
<dbReference type="SUPFAM" id="SSF51161">
    <property type="entry name" value="Trimeric LpxA-like enzymes"/>
    <property type="match status" value="1"/>
</dbReference>
<dbReference type="PROSITE" id="PS00101">
    <property type="entry name" value="HEXAPEP_TRANSFERASES"/>
    <property type="match status" value="1"/>
</dbReference>
<feature type="chain" id="PRO_0000376660" description="2,3,4,5-tetrahydropyridine-2,6-dicarboxylate N-acetyltransferase">
    <location>
        <begin position="1"/>
        <end position="236"/>
    </location>
</feature>
<reference key="1">
    <citation type="journal article" date="2007" name="Proc. Natl. Acad. Sci. U.S.A.">
        <title>Genome and proteome of long-chain alkane degrading Geobacillus thermodenitrificans NG80-2 isolated from a deep-subsurface oil reservoir.</title>
        <authorList>
            <person name="Feng L."/>
            <person name="Wang W."/>
            <person name="Cheng J."/>
            <person name="Ren Y."/>
            <person name="Zhao G."/>
            <person name="Gao C."/>
            <person name="Tang Y."/>
            <person name="Liu X."/>
            <person name="Han W."/>
            <person name="Peng X."/>
            <person name="Liu R."/>
            <person name="Wang L."/>
        </authorList>
    </citation>
    <scope>NUCLEOTIDE SEQUENCE [LARGE SCALE GENOMIC DNA]</scope>
    <source>
        <strain>NG80-2</strain>
    </source>
</reference>
<sequence length="236" mass="24836">MKMMDANEIISFIQNSKKSTPVKVYIKGDLEGIDFGSSAKTFITGNAGVVFGEWQDIQAAIEANQDKIEDYVVENDRRNSAIPLLDLKGVKARIEPGAIIRDHVEIGDNAVIMMGAVINIGAVIGEGTMIDMNAVLGGRATVGKNCHIGAGAVLAGVIEPPSAKPVVIEDDVLIGANAVILEGVTVGKGAVVAAGAIVVEDVPPYTVVAGVPARVIKQIDEQTRAKTEIKQELRQL</sequence>
<proteinExistence type="inferred from homology"/>
<evidence type="ECO:0000255" key="1">
    <source>
        <dbReference type="HAMAP-Rule" id="MF_01691"/>
    </source>
</evidence>
<protein>
    <recommendedName>
        <fullName evidence="1">2,3,4,5-tetrahydropyridine-2,6-dicarboxylate N-acetyltransferase</fullName>
        <ecNumber evidence="1">2.3.1.89</ecNumber>
    </recommendedName>
    <alternativeName>
        <fullName evidence="1">Tetrahydrodipicolinate N-acetyltransferase</fullName>
        <shortName evidence="1">THP acetyltransferase</shortName>
        <shortName evidence="1">Tetrahydropicolinate acetylase</shortName>
    </alternativeName>
</protein>
<keyword id="KW-0012">Acyltransferase</keyword>
<keyword id="KW-0028">Amino-acid biosynthesis</keyword>
<keyword id="KW-0220">Diaminopimelate biosynthesis</keyword>
<keyword id="KW-0457">Lysine biosynthesis</keyword>
<keyword id="KW-0677">Repeat</keyword>
<keyword id="KW-0808">Transferase</keyword>
<accession>A4ILT5</accession>
<gene>
    <name evidence="1" type="primary">dapH</name>
    <name type="ordered locus">GTNG_0911</name>
</gene>
<comment type="function">
    <text evidence="1">Catalyzes the transfer of an acetyl group from acetyl-CoA to tetrahydrodipicolinate.</text>
</comment>
<comment type="catalytic activity">
    <reaction evidence="1">
        <text>(S)-2,3,4,5-tetrahydrodipicolinate + acetyl-CoA + H2O = L-2-acetamido-6-oxoheptanedioate + CoA</text>
        <dbReference type="Rhea" id="RHEA:13085"/>
        <dbReference type="ChEBI" id="CHEBI:15377"/>
        <dbReference type="ChEBI" id="CHEBI:16845"/>
        <dbReference type="ChEBI" id="CHEBI:57287"/>
        <dbReference type="ChEBI" id="CHEBI:57288"/>
        <dbReference type="ChEBI" id="CHEBI:58117"/>
        <dbReference type="EC" id="2.3.1.89"/>
    </reaction>
</comment>
<comment type="pathway">
    <text evidence="1">Amino-acid biosynthesis; L-lysine biosynthesis via DAP pathway; LL-2,6-diaminopimelate from (S)-tetrahydrodipicolinate (acetylase route): step 1/3.</text>
</comment>
<comment type="similarity">
    <text evidence="1">Belongs to the transferase hexapeptide repeat family. DapH subfamily.</text>
</comment>
<name>DAPH_GEOTN</name>